<protein>
    <recommendedName>
        <fullName evidence="1">Large ribosomal subunit protein uL6</fullName>
    </recommendedName>
    <alternativeName>
        <fullName evidence="2">50S ribosomal protein L6</fullName>
    </alternativeName>
</protein>
<evidence type="ECO:0000255" key="1">
    <source>
        <dbReference type="HAMAP-Rule" id="MF_01365"/>
    </source>
</evidence>
<evidence type="ECO:0000305" key="2"/>
<organism>
    <name type="scientific">Sinorhizobium medicae (strain WSM419)</name>
    <name type="common">Ensifer medicae</name>
    <dbReference type="NCBI Taxonomy" id="366394"/>
    <lineage>
        <taxon>Bacteria</taxon>
        <taxon>Pseudomonadati</taxon>
        <taxon>Pseudomonadota</taxon>
        <taxon>Alphaproteobacteria</taxon>
        <taxon>Hyphomicrobiales</taxon>
        <taxon>Rhizobiaceae</taxon>
        <taxon>Sinorhizobium/Ensifer group</taxon>
        <taxon>Sinorhizobium</taxon>
    </lineage>
</organism>
<dbReference type="EMBL" id="CP000738">
    <property type="protein sequence ID" value="ABR59854.1"/>
    <property type="molecule type" value="Genomic_DNA"/>
</dbReference>
<dbReference type="RefSeq" id="WP_011975182.1">
    <property type="nucleotide sequence ID" value="NC_009636.1"/>
</dbReference>
<dbReference type="RefSeq" id="YP_001326689.1">
    <property type="nucleotide sequence ID" value="NC_009636.1"/>
</dbReference>
<dbReference type="SMR" id="A6U874"/>
<dbReference type="STRING" id="366394.Smed_1001"/>
<dbReference type="GeneID" id="61614915"/>
<dbReference type="KEGG" id="smd:Smed_1001"/>
<dbReference type="PATRIC" id="fig|366394.8.peg.4122"/>
<dbReference type="eggNOG" id="COG0097">
    <property type="taxonomic scope" value="Bacteria"/>
</dbReference>
<dbReference type="HOGENOM" id="CLU_065464_1_2_5"/>
<dbReference type="OrthoDB" id="9805007at2"/>
<dbReference type="Proteomes" id="UP000001108">
    <property type="component" value="Chromosome"/>
</dbReference>
<dbReference type="GO" id="GO:0022625">
    <property type="term" value="C:cytosolic large ribosomal subunit"/>
    <property type="evidence" value="ECO:0007669"/>
    <property type="project" value="TreeGrafter"/>
</dbReference>
<dbReference type="GO" id="GO:0019843">
    <property type="term" value="F:rRNA binding"/>
    <property type="evidence" value="ECO:0007669"/>
    <property type="project" value="UniProtKB-UniRule"/>
</dbReference>
<dbReference type="GO" id="GO:0003735">
    <property type="term" value="F:structural constituent of ribosome"/>
    <property type="evidence" value="ECO:0007669"/>
    <property type="project" value="InterPro"/>
</dbReference>
<dbReference type="GO" id="GO:0002181">
    <property type="term" value="P:cytoplasmic translation"/>
    <property type="evidence" value="ECO:0007669"/>
    <property type="project" value="TreeGrafter"/>
</dbReference>
<dbReference type="FunFam" id="3.90.930.12:FF:000001">
    <property type="entry name" value="50S ribosomal protein L6"/>
    <property type="match status" value="1"/>
</dbReference>
<dbReference type="FunFam" id="3.90.930.12:FF:000002">
    <property type="entry name" value="50S ribosomal protein L6"/>
    <property type="match status" value="1"/>
</dbReference>
<dbReference type="Gene3D" id="3.90.930.12">
    <property type="entry name" value="Ribosomal protein L6, alpha-beta domain"/>
    <property type="match status" value="2"/>
</dbReference>
<dbReference type="HAMAP" id="MF_01365_B">
    <property type="entry name" value="Ribosomal_uL6_B"/>
    <property type="match status" value="1"/>
</dbReference>
<dbReference type="InterPro" id="IPR000702">
    <property type="entry name" value="Ribosomal_uL6-like"/>
</dbReference>
<dbReference type="InterPro" id="IPR036789">
    <property type="entry name" value="Ribosomal_uL6-like_a/b-dom_sf"/>
</dbReference>
<dbReference type="InterPro" id="IPR020040">
    <property type="entry name" value="Ribosomal_uL6_a/b-dom"/>
</dbReference>
<dbReference type="InterPro" id="IPR019906">
    <property type="entry name" value="Ribosomal_uL6_bac-type"/>
</dbReference>
<dbReference type="InterPro" id="IPR002358">
    <property type="entry name" value="Ribosomal_uL6_CS"/>
</dbReference>
<dbReference type="NCBIfam" id="TIGR03654">
    <property type="entry name" value="L6_bact"/>
    <property type="match status" value="1"/>
</dbReference>
<dbReference type="PANTHER" id="PTHR11655">
    <property type="entry name" value="60S/50S RIBOSOMAL PROTEIN L6/L9"/>
    <property type="match status" value="1"/>
</dbReference>
<dbReference type="PANTHER" id="PTHR11655:SF14">
    <property type="entry name" value="LARGE RIBOSOMAL SUBUNIT PROTEIN UL6M"/>
    <property type="match status" value="1"/>
</dbReference>
<dbReference type="Pfam" id="PF00347">
    <property type="entry name" value="Ribosomal_L6"/>
    <property type="match status" value="2"/>
</dbReference>
<dbReference type="PIRSF" id="PIRSF002162">
    <property type="entry name" value="Ribosomal_L6"/>
    <property type="match status" value="1"/>
</dbReference>
<dbReference type="PRINTS" id="PR00059">
    <property type="entry name" value="RIBOSOMALL6"/>
</dbReference>
<dbReference type="SUPFAM" id="SSF56053">
    <property type="entry name" value="Ribosomal protein L6"/>
    <property type="match status" value="2"/>
</dbReference>
<dbReference type="PROSITE" id="PS00525">
    <property type="entry name" value="RIBOSOMAL_L6_1"/>
    <property type="match status" value="1"/>
</dbReference>
<accession>A6U874</accession>
<keyword id="KW-0687">Ribonucleoprotein</keyword>
<keyword id="KW-0689">Ribosomal protein</keyword>
<keyword id="KW-0694">RNA-binding</keyword>
<keyword id="KW-0699">rRNA-binding</keyword>
<reference key="1">
    <citation type="submission" date="2007-06" db="EMBL/GenBank/DDBJ databases">
        <title>Complete sequence of Sinorhizobium medicae WSM419 chromosome.</title>
        <authorList>
            <consortium name="US DOE Joint Genome Institute"/>
            <person name="Copeland A."/>
            <person name="Lucas S."/>
            <person name="Lapidus A."/>
            <person name="Barry K."/>
            <person name="Glavina del Rio T."/>
            <person name="Dalin E."/>
            <person name="Tice H."/>
            <person name="Pitluck S."/>
            <person name="Chain P."/>
            <person name="Malfatti S."/>
            <person name="Shin M."/>
            <person name="Vergez L."/>
            <person name="Schmutz J."/>
            <person name="Larimer F."/>
            <person name="Land M."/>
            <person name="Hauser L."/>
            <person name="Kyrpides N."/>
            <person name="Mikhailova N."/>
            <person name="Reeve W.G."/>
            <person name="Richardson P."/>
        </authorList>
    </citation>
    <scope>NUCLEOTIDE SEQUENCE [LARGE SCALE GENOMIC DNA]</scope>
    <source>
        <strain>WSM419</strain>
    </source>
</reference>
<feature type="chain" id="PRO_1000055310" description="Large ribosomal subunit protein uL6">
    <location>
        <begin position="1"/>
        <end position="177"/>
    </location>
</feature>
<comment type="function">
    <text evidence="1">This protein binds to the 23S rRNA, and is important in its secondary structure. It is located near the subunit interface in the base of the L7/L12 stalk, and near the tRNA binding site of the peptidyltransferase center.</text>
</comment>
<comment type="subunit">
    <text evidence="1">Part of the 50S ribosomal subunit.</text>
</comment>
<comment type="similarity">
    <text evidence="1">Belongs to the universal ribosomal protein uL6 family.</text>
</comment>
<sequence>MSRIGKKPVQVPAGVTANVDGQKVTAKGPKGELFFVANDEVSVKLENNTVVVQPVNESKDARAKWGMSRTMIENILKGVKDGYERKLEINGVGYRASMQGKNLQLALGFSHDVVYQTPEGITIAVPKPTEIVVSGINKQQVGQVAAEIREYRGPEPYKGKGVKYAEERIVRKEGKKK</sequence>
<name>RL6_SINMW</name>
<gene>
    <name evidence="1" type="primary">rplF</name>
    <name type="ordered locus">Smed_1001</name>
</gene>
<proteinExistence type="inferred from homology"/>